<proteinExistence type="inferred from homology"/>
<protein>
    <recommendedName>
        <fullName evidence="1">tRNA (guanine-N(1)-)-methyltransferase</fullName>
        <ecNumber evidence="1">2.1.1.228</ecNumber>
    </recommendedName>
    <alternativeName>
        <fullName evidence="1">M1G-methyltransferase</fullName>
    </alternativeName>
    <alternativeName>
        <fullName evidence="1">tRNA [GM37] methyltransferase</fullName>
    </alternativeName>
</protein>
<comment type="function">
    <text evidence="1">Specifically methylates guanosine-37 in various tRNAs.</text>
</comment>
<comment type="catalytic activity">
    <reaction evidence="1">
        <text>guanosine(37) in tRNA + S-adenosyl-L-methionine = N(1)-methylguanosine(37) in tRNA + S-adenosyl-L-homocysteine + H(+)</text>
        <dbReference type="Rhea" id="RHEA:36899"/>
        <dbReference type="Rhea" id="RHEA-COMP:10145"/>
        <dbReference type="Rhea" id="RHEA-COMP:10147"/>
        <dbReference type="ChEBI" id="CHEBI:15378"/>
        <dbReference type="ChEBI" id="CHEBI:57856"/>
        <dbReference type="ChEBI" id="CHEBI:59789"/>
        <dbReference type="ChEBI" id="CHEBI:73542"/>
        <dbReference type="ChEBI" id="CHEBI:74269"/>
        <dbReference type="EC" id="2.1.1.228"/>
    </reaction>
</comment>
<comment type="subunit">
    <text evidence="1">Homodimer.</text>
</comment>
<comment type="subcellular location">
    <subcellularLocation>
        <location evidence="1">Cytoplasm</location>
    </subcellularLocation>
</comment>
<comment type="similarity">
    <text evidence="1">Belongs to the RNA methyltransferase TrmD family.</text>
</comment>
<sequence>MRIDIITVLPEMIEGFFNCSIMKRAQDKGLAEIHIHNLRDYTEDKYRRVDDYPFGGFAGMVMKIEPIERCINTLKAERDYDEVIFTTPDGEQFDQKMANSLSLSGNLIILCGHFKGIDYRIREHLITKEISIGDYVLTGGELAAAVMADAIVRIIPGVISDEQSALSDSFQDNLLAAPVYTRPAEYKGWKVPEILLSGHEAKIKEWELQQSLERTRRLRPDLLED</sequence>
<keyword id="KW-0963">Cytoplasm</keyword>
<keyword id="KW-0489">Methyltransferase</keyword>
<keyword id="KW-0949">S-adenosyl-L-methionine</keyword>
<keyword id="KW-0808">Transferase</keyword>
<keyword id="KW-0819">tRNA processing</keyword>
<feature type="chain" id="PRO_0000060328" description="tRNA (guanine-N(1)-)-methyltransferase">
    <location>
        <begin position="1"/>
        <end position="225"/>
    </location>
</feature>
<feature type="binding site" evidence="1">
    <location>
        <position position="112"/>
    </location>
    <ligand>
        <name>S-adenosyl-L-methionine</name>
        <dbReference type="ChEBI" id="CHEBI:59789"/>
    </ligand>
</feature>
<feature type="binding site" evidence="1">
    <location>
        <begin position="132"/>
        <end position="137"/>
    </location>
    <ligand>
        <name>S-adenosyl-L-methionine</name>
        <dbReference type="ChEBI" id="CHEBI:59789"/>
    </ligand>
</feature>
<accession>Q64TM8</accession>
<organism>
    <name type="scientific">Bacteroides fragilis (strain YCH46)</name>
    <dbReference type="NCBI Taxonomy" id="295405"/>
    <lineage>
        <taxon>Bacteria</taxon>
        <taxon>Pseudomonadati</taxon>
        <taxon>Bacteroidota</taxon>
        <taxon>Bacteroidia</taxon>
        <taxon>Bacteroidales</taxon>
        <taxon>Bacteroidaceae</taxon>
        <taxon>Bacteroides</taxon>
    </lineage>
</organism>
<gene>
    <name evidence="1" type="primary">trmD</name>
    <name type="ordered locus">BF2402</name>
</gene>
<reference key="1">
    <citation type="journal article" date="2004" name="Proc. Natl. Acad. Sci. U.S.A.">
        <title>Genomic analysis of Bacteroides fragilis reveals extensive DNA inversions regulating cell surface adaptation.</title>
        <authorList>
            <person name="Kuwahara T."/>
            <person name="Yamashita A."/>
            <person name="Hirakawa H."/>
            <person name="Nakayama H."/>
            <person name="Toh H."/>
            <person name="Okada N."/>
            <person name="Kuhara S."/>
            <person name="Hattori M."/>
            <person name="Hayashi T."/>
            <person name="Ohnishi Y."/>
        </authorList>
    </citation>
    <scope>NUCLEOTIDE SEQUENCE [LARGE SCALE GENOMIC DNA]</scope>
    <source>
        <strain>YCH46</strain>
    </source>
</reference>
<name>TRMD_BACFR</name>
<dbReference type="EC" id="2.1.1.228" evidence="1"/>
<dbReference type="EMBL" id="AP006841">
    <property type="protein sequence ID" value="BAD49151.1"/>
    <property type="molecule type" value="Genomic_DNA"/>
</dbReference>
<dbReference type="RefSeq" id="WP_010993029.1">
    <property type="nucleotide sequence ID" value="NC_006347.1"/>
</dbReference>
<dbReference type="RefSeq" id="YP_099685.1">
    <property type="nucleotide sequence ID" value="NC_006347.1"/>
</dbReference>
<dbReference type="SMR" id="Q64TM8"/>
<dbReference type="STRING" id="295405.BF2402"/>
<dbReference type="GeneID" id="60367420"/>
<dbReference type="KEGG" id="bfr:BF2402"/>
<dbReference type="PATRIC" id="fig|295405.11.peg.2320"/>
<dbReference type="HOGENOM" id="CLU_047363_0_1_10"/>
<dbReference type="OrthoDB" id="9807416at2"/>
<dbReference type="Proteomes" id="UP000002197">
    <property type="component" value="Chromosome"/>
</dbReference>
<dbReference type="GO" id="GO:0005829">
    <property type="term" value="C:cytosol"/>
    <property type="evidence" value="ECO:0007669"/>
    <property type="project" value="TreeGrafter"/>
</dbReference>
<dbReference type="GO" id="GO:0052906">
    <property type="term" value="F:tRNA (guanine(37)-N1)-methyltransferase activity"/>
    <property type="evidence" value="ECO:0007669"/>
    <property type="project" value="UniProtKB-UniRule"/>
</dbReference>
<dbReference type="GO" id="GO:0002939">
    <property type="term" value="P:tRNA N1-guanine methylation"/>
    <property type="evidence" value="ECO:0007669"/>
    <property type="project" value="TreeGrafter"/>
</dbReference>
<dbReference type="CDD" id="cd18080">
    <property type="entry name" value="TrmD-like"/>
    <property type="match status" value="1"/>
</dbReference>
<dbReference type="FunFam" id="3.40.1280.10:FF:000001">
    <property type="entry name" value="tRNA (guanine-N(1)-)-methyltransferase"/>
    <property type="match status" value="1"/>
</dbReference>
<dbReference type="Gene3D" id="3.40.1280.10">
    <property type="match status" value="1"/>
</dbReference>
<dbReference type="Gene3D" id="1.10.1270.20">
    <property type="entry name" value="tRNA(m1g37)methyltransferase, domain 2"/>
    <property type="match status" value="1"/>
</dbReference>
<dbReference type="HAMAP" id="MF_00605">
    <property type="entry name" value="TrmD"/>
    <property type="match status" value="1"/>
</dbReference>
<dbReference type="InterPro" id="IPR029028">
    <property type="entry name" value="Alpha/beta_knot_MTases"/>
</dbReference>
<dbReference type="InterPro" id="IPR023148">
    <property type="entry name" value="tRNA_m1G_MeTrfase_C_sf"/>
</dbReference>
<dbReference type="InterPro" id="IPR002649">
    <property type="entry name" value="tRNA_m1G_MeTrfase_TrmD"/>
</dbReference>
<dbReference type="InterPro" id="IPR029026">
    <property type="entry name" value="tRNA_m1G_MTases_N"/>
</dbReference>
<dbReference type="InterPro" id="IPR016009">
    <property type="entry name" value="tRNA_MeTrfase_TRMD/TRM10"/>
</dbReference>
<dbReference type="NCBIfam" id="NF000648">
    <property type="entry name" value="PRK00026.1"/>
    <property type="match status" value="1"/>
</dbReference>
<dbReference type="NCBIfam" id="TIGR00088">
    <property type="entry name" value="trmD"/>
    <property type="match status" value="1"/>
</dbReference>
<dbReference type="PANTHER" id="PTHR46417">
    <property type="entry name" value="TRNA (GUANINE-N(1)-)-METHYLTRANSFERASE"/>
    <property type="match status" value="1"/>
</dbReference>
<dbReference type="PANTHER" id="PTHR46417:SF1">
    <property type="entry name" value="TRNA (GUANINE-N(1)-)-METHYLTRANSFERASE"/>
    <property type="match status" value="1"/>
</dbReference>
<dbReference type="Pfam" id="PF01746">
    <property type="entry name" value="tRNA_m1G_MT"/>
    <property type="match status" value="1"/>
</dbReference>
<dbReference type="PIRSF" id="PIRSF000386">
    <property type="entry name" value="tRNA_mtase"/>
    <property type="match status" value="1"/>
</dbReference>
<dbReference type="SUPFAM" id="SSF75217">
    <property type="entry name" value="alpha/beta knot"/>
    <property type="match status" value="1"/>
</dbReference>
<evidence type="ECO:0000255" key="1">
    <source>
        <dbReference type="HAMAP-Rule" id="MF_00605"/>
    </source>
</evidence>